<organism>
    <name type="scientific">Salmonella typhimurium (strain LT2 / SGSC1412 / ATCC 700720)</name>
    <dbReference type="NCBI Taxonomy" id="99287"/>
    <lineage>
        <taxon>Bacteria</taxon>
        <taxon>Pseudomonadati</taxon>
        <taxon>Pseudomonadota</taxon>
        <taxon>Gammaproteobacteria</taxon>
        <taxon>Enterobacterales</taxon>
        <taxon>Enterobacteriaceae</taxon>
        <taxon>Salmonella</taxon>
    </lineage>
</organism>
<gene>
    <name evidence="2" type="primary">aroK</name>
    <name type="ordered locus">STM3487</name>
</gene>
<feature type="initiator methionine" description="Removed" evidence="1">
    <location>
        <position position="1"/>
    </location>
</feature>
<feature type="chain" id="PRO_0000192406" description="Shikimate kinase 1">
    <location>
        <begin position="2"/>
        <end position="173"/>
    </location>
</feature>
<feature type="binding site" evidence="2">
    <location>
        <begin position="14"/>
        <end position="19"/>
    </location>
    <ligand>
        <name>ATP</name>
        <dbReference type="ChEBI" id="CHEBI:30616"/>
    </ligand>
</feature>
<feature type="binding site" evidence="2">
    <location>
        <position position="18"/>
    </location>
    <ligand>
        <name>Mg(2+)</name>
        <dbReference type="ChEBI" id="CHEBI:18420"/>
    </ligand>
</feature>
<feature type="binding site" evidence="2">
    <location>
        <position position="36"/>
    </location>
    <ligand>
        <name>substrate</name>
    </ligand>
</feature>
<feature type="binding site" evidence="2">
    <location>
        <position position="60"/>
    </location>
    <ligand>
        <name>substrate</name>
    </ligand>
</feature>
<feature type="binding site" evidence="2">
    <location>
        <position position="82"/>
    </location>
    <ligand>
        <name>substrate</name>
    </ligand>
</feature>
<feature type="binding site" evidence="2">
    <location>
        <position position="120"/>
    </location>
    <ligand>
        <name>ATP</name>
        <dbReference type="ChEBI" id="CHEBI:30616"/>
    </ligand>
</feature>
<feature type="binding site" evidence="2">
    <location>
        <position position="140"/>
    </location>
    <ligand>
        <name>substrate</name>
    </ligand>
</feature>
<feature type="binding site" evidence="2">
    <location>
        <position position="157"/>
    </location>
    <ligand>
        <name>ATP</name>
        <dbReference type="ChEBI" id="CHEBI:30616"/>
    </ligand>
</feature>
<protein>
    <recommendedName>
        <fullName evidence="2">Shikimate kinase 1</fullName>
        <shortName evidence="2">SK 1</shortName>
        <ecNumber evidence="2">2.7.1.71</ecNumber>
    </recommendedName>
</protein>
<name>AROK_SALTY</name>
<proteinExistence type="inferred from homology"/>
<evidence type="ECO:0000250" key="1"/>
<evidence type="ECO:0000255" key="2">
    <source>
        <dbReference type="HAMAP-Rule" id="MF_00109"/>
    </source>
</evidence>
<accession>P63601</accession>
<accession>Q8XFE9</accession>
<sequence length="173" mass="19470">MAEKRNIFLVGPMGAGKSTIGRQLAQQLNMEFYDSDQEIEKRTGADVGWVFDVEGEDGFRNREEKVINELTEKQGIVLATGGGSVKSRETRNRLSARGVVVYLETTIEKQLARTQRDKKRPLLQVEAPPREVLEALANERNPLYEEIADVTIRTDDQSAKVVANQIIHMLESN</sequence>
<dbReference type="EC" id="2.7.1.71" evidence="2"/>
<dbReference type="EMBL" id="AE006468">
    <property type="protein sequence ID" value="AAL22349.1"/>
    <property type="molecule type" value="Genomic_DNA"/>
</dbReference>
<dbReference type="RefSeq" id="NP_462390.1">
    <property type="nucleotide sequence ID" value="NC_003197.2"/>
</dbReference>
<dbReference type="RefSeq" id="WP_000818621.1">
    <property type="nucleotide sequence ID" value="NC_003197.2"/>
</dbReference>
<dbReference type="SMR" id="P63601"/>
<dbReference type="STRING" id="99287.STM3487"/>
<dbReference type="PaxDb" id="99287-STM3487"/>
<dbReference type="GeneID" id="1255010"/>
<dbReference type="GeneID" id="66757820"/>
<dbReference type="KEGG" id="stm:STM3487"/>
<dbReference type="PATRIC" id="fig|99287.12.peg.3685"/>
<dbReference type="HOGENOM" id="CLU_057607_2_2_6"/>
<dbReference type="OMA" id="FMGCGKS"/>
<dbReference type="PhylomeDB" id="P63601"/>
<dbReference type="BioCyc" id="SENT99287:STM3487-MONOMER"/>
<dbReference type="UniPathway" id="UPA00053">
    <property type="reaction ID" value="UER00088"/>
</dbReference>
<dbReference type="Proteomes" id="UP000001014">
    <property type="component" value="Chromosome"/>
</dbReference>
<dbReference type="GO" id="GO:0005829">
    <property type="term" value="C:cytosol"/>
    <property type="evidence" value="ECO:0000318"/>
    <property type="project" value="GO_Central"/>
</dbReference>
<dbReference type="GO" id="GO:0005524">
    <property type="term" value="F:ATP binding"/>
    <property type="evidence" value="ECO:0007669"/>
    <property type="project" value="UniProtKB-UniRule"/>
</dbReference>
<dbReference type="GO" id="GO:0000287">
    <property type="term" value="F:magnesium ion binding"/>
    <property type="evidence" value="ECO:0007669"/>
    <property type="project" value="UniProtKB-UniRule"/>
</dbReference>
<dbReference type="GO" id="GO:0004765">
    <property type="term" value="F:shikimate kinase activity"/>
    <property type="evidence" value="ECO:0000318"/>
    <property type="project" value="GO_Central"/>
</dbReference>
<dbReference type="GO" id="GO:0008652">
    <property type="term" value="P:amino acid biosynthetic process"/>
    <property type="evidence" value="ECO:0007669"/>
    <property type="project" value="UniProtKB-KW"/>
</dbReference>
<dbReference type="GO" id="GO:0009073">
    <property type="term" value="P:aromatic amino acid family biosynthetic process"/>
    <property type="evidence" value="ECO:0007669"/>
    <property type="project" value="UniProtKB-KW"/>
</dbReference>
<dbReference type="GO" id="GO:0009423">
    <property type="term" value="P:chorismate biosynthetic process"/>
    <property type="evidence" value="ECO:0007669"/>
    <property type="project" value="UniProtKB-UniRule"/>
</dbReference>
<dbReference type="CDD" id="cd00464">
    <property type="entry name" value="SK"/>
    <property type="match status" value="1"/>
</dbReference>
<dbReference type="FunFam" id="3.40.50.300:FF:000099">
    <property type="entry name" value="Shikimate kinase 1"/>
    <property type="match status" value="1"/>
</dbReference>
<dbReference type="Gene3D" id="3.40.50.300">
    <property type="entry name" value="P-loop containing nucleotide triphosphate hydrolases"/>
    <property type="match status" value="1"/>
</dbReference>
<dbReference type="HAMAP" id="MF_00109">
    <property type="entry name" value="Shikimate_kinase"/>
    <property type="match status" value="1"/>
</dbReference>
<dbReference type="InterPro" id="IPR027417">
    <property type="entry name" value="P-loop_NTPase"/>
</dbReference>
<dbReference type="InterPro" id="IPR031322">
    <property type="entry name" value="Shikimate/glucono_kinase"/>
</dbReference>
<dbReference type="InterPro" id="IPR000623">
    <property type="entry name" value="Shikimate_kinase/TSH1"/>
</dbReference>
<dbReference type="InterPro" id="IPR023000">
    <property type="entry name" value="Shikimate_kinase_CS"/>
</dbReference>
<dbReference type="NCBIfam" id="NF003456">
    <property type="entry name" value="PRK05057.1"/>
    <property type="match status" value="1"/>
</dbReference>
<dbReference type="PANTHER" id="PTHR21087">
    <property type="entry name" value="SHIKIMATE KINASE"/>
    <property type="match status" value="1"/>
</dbReference>
<dbReference type="PANTHER" id="PTHR21087:SF16">
    <property type="entry name" value="SHIKIMATE KINASE 1, CHLOROPLASTIC"/>
    <property type="match status" value="1"/>
</dbReference>
<dbReference type="Pfam" id="PF01202">
    <property type="entry name" value="SKI"/>
    <property type="match status" value="1"/>
</dbReference>
<dbReference type="PRINTS" id="PR01100">
    <property type="entry name" value="SHIKIMTKNASE"/>
</dbReference>
<dbReference type="SUPFAM" id="SSF52540">
    <property type="entry name" value="P-loop containing nucleoside triphosphate hydrolases"/>
    <property type="match status" value="1"/>
</dbReference>
<dbReference type="PROSITE" id="PS01128">
    <property type="entry name" value="SHIKIMATE_KINASE"/>
    <property type="match status" value="1"/>
</dbReference>
<comment type="function">
    <text evidence="2">Catalyzes the specific phosphorylation of the 3-hydroxyl group of shikimic acid using ATP as a cosubstrate.</text>
</comment>
<comment type="catalytic activity">
    <reaction evidence="2">
        <text>shikimate + ATP = 3-phosphoshikimate + ADP + H(+)</text>
        <dbReference type="Rhea" id="RHEA:13121"/>
        <dbReference type="ChEBI" id="CHEBI:15378"/>
        <dbReference type="ChEBI" id="CHEBI:30616"/>
        <dbReference type="ChEBI" id="CHEBI:36208"/>
        <dbReference type="ChEBI" id="CHEBI:145989"/>
        <dbReference type="ChEBI" id="CHEBI:456216"/>
        <dbReference type="EC" id="2.7.1.71"/>
    </reaction>
</comment>
<comment type="cofactor">
    <cofactor evidence="2">
        <name>Mg(2+)</name>
        <dbReference type="ChEBI" id="CHEBI:18420"/>
    </cofactor>
    <text evidence="2">Binds 1 Mg(2+) ion per subunit.</text>
</comment>
<comment type="pathway">
    <text evidence="2">Metabolic intermediate biosynthesis; chorismate biosynthesis; chorismate from D-erythrose 4-phosphate and phosphoenolpyruvate: step 5/7.</text>
</comment>
<comment type="subunit">
    <text evidence="2">Monomer.</text>
</comment>
<comment type="subcellular location">
    <subcellularLocation>
        <location evidence="2">Cytoplasm</location>
    </subcellularLocation>
</comment>
<comment type="similarity">
    <text evidence="2">Belongs to the shikimate kinase family.</text>
</comment>
<keyword id="KW-0028">Amino-acid biosynthesis</keyword>
<keyword id="KW-0057">Aromatic amino acid biosynthesis</keyword>
<keyword id="KW-0067">ATP-binding</keyword>
<keyword id="KW-0963">Cytoplasm</keyword>
<keyword id="KW-0418">Kinase</keyword>
<keyword id="KW-0460">Magnesium</keyword>
<keyword id="KW-0479">Metal-binding</keyword>
<keyword id="KW-0547">Nucleotide-binding</keyword>
<keyword id="KW-1185">Reference proteome</keyword>
<keyword id="KW-0808">Transferase</keyword>
<reference key="1">
    <citation type="journal article" date="2001" name="Nature">
        <title>Complete genome sequence of Salmonella enterica serovar Typhimurium LT2.</title>
        <authorList>
            <person name="McClelland M."/>
            <person name="Sanderson K.E."/>
            <person name="Spieth J."/>
            <person name="Clifton S.W."/>
            <person name="Latreille P."/>
            <person name="Courtney L."/>
            <person name="Porwollik S."/>
            <person name="Ali J."/>
            <person name="Dante M."/>
            <person name="Du F."/>
            <person name="Hou S."/>
            <person name="Layman D."/>
            <person name="Leonard S."/>
            <person name="Nguyen C."/>
            <person name="Scott K."/>
            <person name="Holmes A."/>
            <person name="Grewal N."/>
            <person name="Mulvaney E."/>
            <person name="Ryan E."/>
            <person name="Sun H."/>
            <person name="Florea L."/>
            <person name="Miller W."/>
            <person name="Stoneking T."/>
            <person name="Nhan M."/>
            <person name="Waterston R."/>
            <person name="Wilson R.K."/>
        </authorList>
    </citation>
    <scope>NUCLEOTIDE SEQUENCE [LARGE SCALE GENOMIC DNA]</scope>
    <source>
        <strain>LT2 / SGSC1412 / ATCC 700720</strain>
    </source>
</reference>